<comment type="function">
    <text evidence="1">The RuvA-RuvB-RuvC complex processes Holliday junction (HJ) DNA during genetic recombination and DNA repair, while the RuvA-RuvB complex plays an important role in the rescue of blocked DNA replication forks via replication fork reversal (RFR). RuvA specifically binds to HJ cruciform DNA, conferring on it an open structure. The RuvB hexamer acts as an ATP-dependent pump, pulling dsDNA into and through the RuvAB complex. RuvB forms 2 homohexamers on either side of HJ DNA bound by 1 or 2 RuvA tetramers; 4 subunits per hexamer contact DNA at a time. Coordinated motions by a converter formed by DNA-disengaged RuvB subunits stimulates ATP hydrolysis and nucleotide exchange. Immobilization of the converter enables RuvB to convert the ATP-contained energy into a lever motion, pulling 2 nucleotides of DNA out of the RuvA tetramer per ATP hydrolyzed, thus driving DNA branch migration. The RuvB motors rotate together with the DNA substrate, which together with the progressing nucleotide cycle form the mechanistic basis for DNA recombination by continuous HJ branch migration. Branch migration allows RuvC to scan DNA until it finds its consensus sequence, where it cleaves and resolves cruciform DNA.</text>
</comment>
<comment type="catalytic activity">
    <reaction evidence="1">
        <text>ATP + H2O = ADP + phosphate + H(+)</text>
        <dbReference type="Rhea" id="RHEA:13065"/>
        <dbReference type="ChEBI" id="CHEBI:15377"/>
        <dbReference type="ChEBI" id="CHEBI:15378"/>
        <dbReference type="ChEBI" id="CHEBI:30616"/>
        <dbReference type="ChEBI" id="CHEBI:43474"/>
        <dbReference type="ChEBI" id="CHEBI:456216"/>
    </reaction>
</comment>
<comment type="subunit">
    <text evidence="1">Homohexamer. Forms an RuvA(8)-RuvB(12)-Holliday junction (HJ) complex. HJ DNA is sandwiched between 2 RuvA tetramers; dsDNA enters through RuvA and exits via RuvB. An RuvB hexamer assembles on each DNA strand where it exits the tetramer. Each RuvB hexamer is contacted by two RuvA subunits (via domain III) on 2 adjacent RuvB subunits; this complex drives branch migration. In the full resolvosome a probable DNA-RuvA(4)-RuvB(12)-RuvC(2) complex forms which resolves the HJ.</text>
</comment>
<comment type="subcellular location">
    <subcellularLocation>
        <location evidence="1">Cytoplasm</location>
    </subcellularLocation>
</comment>
<comment type="domain">
    <text evidence="1">Has 3 domains, the large (RuvB-L) and small ATPase (RuvB-S) domains and the C-terminal head (RuvB-H) domain. The head domain binds DNA, while the ATPase domains jointly bind ATP, ADP or are empty depending on the state of the subunit in the translocation cycle. During a single DNA translocation step the structure of each domain remains the same, but their relative positions change.</text>
</comment>
<comment type="similarity">
    <text evidence="1">Belongs to the RuvB family.</text>
</comment>
<gene>
    <name evidence="1" type="primary">ruvB</name>
    <name type="ordered locus">RBAM_024840</name>
</gene>
<sequence length="334" mass="37225">MDERLVSSEADSHESIIEQSLRPQNLAQYIGQKKVKENLRVFIDAAKMRQETLDHVLLYGPPGLGKTTLASIVANEMGVEMRTTSGPAIERPGDLAAILTALEPGDVLFIDEIHRLNRSIEEVLYPAMEDFCLDIVIGKGPSARSVRLDLPPFTLVGATTRVGLLTAPLRDRFGVLSRLEYYTQEELTDIVSRTADVFEVDIEKAPALEIARRSRGTPRVANRLLRRVRDFAQVLGDSRITEEIAHDALERLQVDALGLDHIDHKLLMGMIEKFSGGPVGLDTISATIGEEPHTIEDVYEPYLLQIGFLQRTPRGRVVTPAVYEHFRLEAPARD</sequence>
<dbReference type="EC" id="3.6.4.-" evidence="1"/>
<dbReference type="EMBL" id="CP000560">
    <property type="protein sequence ID" value="ABS74844.1"/>
    <property type="molecule type" value="Genomic_DNA"/>
</dbReference>
<dbReference type="RefSeq" id="WP_007408185.1">
    <property type="nucleotide sequence ID" value="NC_009725.2"/>
</dbReference>
<dbReference type="SMR" id="A7Z768"/>
<dbReference type="GeneID" id="93081627"/>
<dbReference type="KEGG" id="bay:RBAM_024840"/>
<dbReference type="HOGENOM" id="CLU_055599_1_0_9"/>
<dbReference type="Proteomes" id="UP000001120">
    <property type="component" value="Chromosome"/>
</dbReference>
<dbReference type="GO" id="GO:0005737">
    <property type="term" value="C:cytoplasm"/>
    <property type="evidence" value="ECO:0007669"/>
    <property type="project" value="UniProtKB-SubCell"/>
</dbReference>
<dbReference type="GO" id="GO:0048476">
    <property type="term" value="C:Holliday junction resolvase complex"/>
    <property type="evidence" value="ECO:0007669"/>
    <property type="project" value="UniProtKB-UniRule"/>
</dbReference>
<dbReference type="GO" id="GO:0005524">
    <property type="term" value="F:ATP binding"/>
    <property type="evidence" value="ECO:0007669"/>
    <property type="project" value="UniProtKB-UniRule"/>
</dbReference>
<dbReference type="GO" id="GO:0016887">
    <property type="term" value="F:ATP hydrolysis activity"/>
    <property type="evidence" value="ECO:0007669"/>
    <property type="project" value="InterPro"/>
</dbReference>
<dbReference type="GO" id="GO:0000400">
    <property type="term" value="F:four-way junction DNA binding"/>
    <property type="evidence" value="ECO:0007669"/>
    <property type="project" value="UniProtKB-UniRule"/>
</dbReference>
<dbReference type="GO" id="GO:0009378">
    <property type="term" value="F:four-way junction helicase activity"/>
    <property type="evidence" value="ECO:0007669"/>
    <property type="project" value="InterPro"/>
</dbReference>
<dbReference type="GO" id="GO:0006310">
    <property type="term" value="P:DNA recombination"/>
    <property type="evidence" value="ECO:0007669"/>
    <property type="project" value="UniProtKB-UniRule"/>
</dbReference>
<dbReference type="GO" id="GO:0006281">
    <property type="term" value="P:DNA repair"/>
    <property type="evidence" value="ECO:0007669"/>
    <property type="project" value="UniProtKB-UniRule"/>
</dbReference>
<dbReference type="CDD" id="cd00009">
    <property type="entry name" value="AAA"/>
    <property type="match status" value="1"/>
</dbReference>
<dbReference type="Gene3D" id="1.10.8.60">
    <property type="match status" value="1"/>
</dbReference>
<dbReference type="Gene3D" id="3.40.50.300">
    <property type="entry name" value="P-loop containing nucleotide triphosphate hydrolases"/>
    <property type="match status" value="1"/>
</dbReference>
<dbReference type="Gene3D" id="1.10.10.10">
    <property type="entry name" value="Winged helix-like DNA-binding domain superfamily/Winged helix DNA-binding domain"/>
    <property type="match status" value="1"/>
</dbReference>
<dbReference type="HAMAP" id="MF_00016">
    <property type="entry name" value="DNA_HJ_migration_RuvB"/>
    <property type="match status" value="1"/>
</dbReference>
<dbReference type="InterPro" id="IPR003593">
    <property type="entry name" value="AAA+_ATPase"/>
</dbReference>
<dbReference type="InterPro" id="IPR041445">
    <property type="entry name" value="AAA_lid_4"/>
</dbReference>
<dbReference type="InterPro" id="IPR004605">
    <property type="entry name" value="DNA_helicase_Holl-junc_RuvB"/>
</dbReference>
<dbReference type="InterPro" id="IPR027417">
    <property type="entry name" value="P-loop_NTPase"/>
</dbReference>
<dbReference type="InterPro" id="IPR008824">
    <property type="entry name" value="RuvB-like_N"/>
</dbReference>
<dbReference type="InterPro" id="IPR008823">
    <property type="entry name" value="RuvB_C"/>
</dbReference>
<dbReference type="InterPro" id="IPR036388">
    <property type="entry name" value="WH-like_DNA-bd_sf"/>
</dbReference>
<dbReference type="InterPro" id="IPR036390">
    <property type="entry name" value="WH_DNA-bd_sf"/>
</dbReference>
<dbReference type="NCBIfam" id="NF000868">
    <property type="entry name" value="PRK00080.1"/>
    <property type="match status" value="1"/>
</dbReference>
<dbReference type="NCBIfam" id="TIGR00635">
    <property type="entry name" value="ruvB"/>
    <property type="match status" value="1"/>
</dbReference>
<dbReference type="PANTHER" id="PTHR42848">
    <property type="match status" value="1"/>
</dbReference>
<dbReference type="PANTHER" id="PTHR42848:SF1">
    <property type="entry name" value="HOLLIDAY JUNCTION BRANCH MIGRATION COMPLEX SUBUNIT RUVB"/>
    <property type="match status" value="1"/>
</dbReference>
<dbReference type="Pfam" id="PF17864">
    <property type="entry name" value="AAA_lid_4"/>
    <property type="match status" value="1"/>
</dbReference>
<dbReference type="Pfam" id="PF05491">
    <property type="entry name" value="RuvB_C"/>
    <property type="match status" value="1"/>
</dbReference>
<dbReference type="Pfam" id="PF05496">
    <property type="entry name" value="RuvB_N"/>
    <property type="match status" value="1"/>
</dbReference>
<dbReference type="SMART" id="SM00382">
    <property type="entry name" value="AAA"/>
    <property type="match status" value="1"/>
</dbReference>
<dbReference type="SUPFAM" id="SSF52540">
    <property type="entry name" value="P-loop containing nucleoside triphosphate hydrolases"/>
    <property type="match status" value="1"/>
</dbReference>
<dbReference type="SUPFAM" id="SSF46785">
    <property type="entry name" value="Winged helix' DNA-binding domain"/>
    <property type="match status" value="1"/>
</dbReference>
<name>RUVB_BACVZ</name>
<protein>
    <recommendedName>
        <fullName evidence="1">Holliday junction branch migration complex subunit RuvB</fullName>
        <ecNumber evidence="1">3.6.4.-</ecNumber>
    </recommendedName>
</protein>
<feature type="chain" id="PRO_1000001362" description="Holliday junction branch migration complex subunit RuvB">
    <location>
        <begin position="1"/>
        <end position="334"/>
    </location>
</feature>
<feature type="region of interest" description="Large ATPase domain (RuvB-L)" evidence="1">
    <location>
        <begin position="1"/>
        <end position="182"/>
    </location>
</feature>
<feature type="region of interest" description="Small ATPAse domain (RuvB-S)" evidence="1">
    <location>
        <begin position="183"/>
        <end position="253"/>
    </location>
</feature>
<feature type="region of interest" description="Head domain (RuvB-H)" evidence="1">
    <location>
        <begin position="256"/>
        <end position="334"/>
    </location>
</feature>
<feature type="binding site" evidence="1">
    <location>
        <position position="21"/>
    </location>
    <ligand>
        <name>ATP</name>
        <dbReference type="ChEBI" id="CHEBI:30616"/>
    </ligand>
</feature>
<feature type="binding site" evidence="1">
    <location>
        <position position="22"/>
    </location>
    <ligand>
        <name>ATP</name>
        <dbReference type="ChEBI" id="CHEBI:30616"/>
    </ligand>
</feature>
<feature type="binding site" evidence="1">
    <location>
        <position position="63"/>
    </location>
    <ligand>
        <name>ATP</name>
        <dbReference type="ChEBI" id="CHEBI:30616"/>
    </ligand>
</feature>
<feature type="binding site" evidence="1">
    <location>
        <position position="66"/>
    </location>
    <ligand>
        <name>ATP</name>
        <dbReference type="ChEBI" id="CHEBI:30616"/>
    </ligand>
</feature>
<feature type="binding site" evidence="1">
    <location>
        <position position="67"/>
    </location>
    <ligand>
        <name>ATP</name>
        <dbReference type="ChEBI" id="CHEBI:30616"/>
    </ligand>
</feature>
<feature type="binding site" evidence="1">
    <location>
        <position position="67"/>
    </location>
    <ligand>
        <name>Mg(2+)</name>
        <dbReference type="ChEBI" id="CHEBI:18420"/>
    </ligand>
</feature>
<feature type="binding site" evidence="1">
    <location>
        <position position="68"/>
    </location>
    <ligand>
        <name>ATP</name>
        <dbReference type="ChEBI" id="CHEBI:30616"/>
    </ligand>
</feature>
<feature type="binding site" evidence="1">
    <location>
        <begin position="129"/>
        <end position="131"/>
    </location>
    <ligand>
        <name>ATP</name>
        <dbReference type="ChEBI" id="CHEBI:30616"/>
    </ligand>
</feature>
<feature type="binding site" evidence="1">
    <location>
        <position position="172"/>
    </location>
    <ligand>
        <name>ATP</name>
        <dbReference type="ChEBI" id="CHEBI:30616"/>
    </ligand>
</feature>
<feature type="binding site" evidence="1">
    <location>
        <position position="182"/>
    </location>
    <ligand>
        <name>ATP</name>
        <dbReference type="ChEBI" id="CHEBI:30616"/>
    </ligand>
</feature>
<feature type="binding site" evidence="1">
    <location>
        <position position="219"/>
    </location>
    <ligand>
        <name>ATP</name>
        <dbReference type="ChEBI" id="CHEBI:30616"/>
    </ligand>
</feature>
<feature type="binding site" evidence="1">
    <location>
        <position position="311"/>
    </location>
    <ligand>
        <name>DNA</name>
        <dbReference type="ChEBI" id="CHEBI:16991"/>
    </ligand>
</feature>
<feature type="binding site" evidence="1">
    <location>
        <position position="316"/>
    </location>
    <ligand>
        <name>DNA</name>
        <dbReference type="ChEBI" id="CHEBI:16991"/>
    </ligand>
</feature>
<organism>
    <name type="scientific">Bacillus velezensis (strain DSM 23117 / BGSC 10A6 / LMG 26770 / FZB42)</name>
    <name type="common">Bacillus amyloliquefaciens subsp. plantarum</name>
    <dbReference type="NCBI Taxonomy" id="326423"/>
    <lineage>
        <taxon>Bacteria</taxon>
        <taxon>Bacillati</taxon>
        <taxon>Bacillota</taxon>
        <taxon>Bacilli</taxon>
        <taxon>Bacillales</taxon>
        <taxon>Bacillaceae</taxon>
        <taxon>Bacillus</taxon>
        <taxon>Bacillus amyloliquefaciens group</taxon>
    </lineage>
</organism>
<evidence type="ECO:0000255" key="1">
    <source>
        <dbReference type="HAMAP-Rule" id="MF_00016"/>
    </source>
</evidence>
<accession>A7Z768</accession>
<keyword id="KW-0067">ATP-binding</keyword>
<keyword id="KW-0963">Cytoplasm</keyword>
<keyword id="KW-0227">DNA damage</keyword>
<keyword id="KW-0233">DNA recombination</keyword>
<keyword id="KW-0234">DNA repair</keyword>
<keyword id="KW-0238">DNA-binding</keyword>
<keyword id="KW-0378">Hydrolase</keyword>
<keyword id="KW-0547">Nucleotide-binding</keyword>
<reference key="1">
    <citation type="journal article" date="2007" name="Nat. Biotechnol.">
        <title>Comparative analysis of the complete genome sequence of the plant growth-promoting bacterium Bacillus amyloliquefaciens FZB42.</title>
        <authorList>
            <person name="Chen X.H."/>
            <person name="Koumoutsi A."/>
            <person name="Scholz R."/>
            <person name="Eisenreich A."/>
            <person name="Schneider K."/>
            <person name="Heinemeyer I."/>
            <person name="Morgenstern B."/>
            <person name="Voss B."/>
            <person name="Hess W.R."/>
            <person name="Reva O."/>
            <person name="Junge H."/>
            <person name="Voigt B."/>
            <person name="Jungblut P.R."/>
            <person name="Vater J."/>
            <person name="Suessmuth R."/>
            <person name="Liesegang H."/>
            <person name="Strittmatter A."/>
            <person name="Gottschalk G."/>
            <person name="Borriss R."/>
        </authorList>
    </citation>
    <scope>NUCLEOTIDE SEQUENCE [LARGE SCALE GENOMIC DNA]</scope>
    <source>
        <strain>DSM 23117 / BGSC 10A6 / LMG 26770 / FZB42</strain>
    </source>
</reference>
<proteinExistence type="inferred from homology"/>